<keyword id="KW-0687">Ribonucleoprotein</keyword>
<keyword id="KW-0689">Ribosomal protein</keyword>
<keyword id="KW-0694">RNA-binding</keyword>
<keyword id="KW-0699">rRNA-binding</keyword>
<reference key="1">
    <citation type="submission" date="2006-12" db="EMBL/GenBank/DDBJ databases">
        <title>Complete sequence of Shewanella sp. W3-18-1.</title>
        <authorList>
            <consortium name="US DOE Joint Genome Institute"/>
            <person name="Copeland A."/>
            <person name="Lucas S."/>
            <person name="Lapidus A."/>
            <person name="Barry K."/>
            <person name="Detter J.C."/>
            <person name="Glavina del Rio T."/>
            <person name="Hammon N."/>
            <person name="Israni S."/>
            <person name="Dalin E."/>
            <person name="Tice H."/>
            <person name="Pitluck S."/>
            <person name="Chain P."/>
            <person name="Malfatti S."/>
            <person name="Shin M."/>
            <person name="Vergez L."/>
            <person name="Schmutz J."/>
            <person name="Larimer F."/>
            <person name="Land M."/>
            <person name="Hauser L."/>
            <person name="Kyrpides N."/>
            <person name="Lykidis A."/>
            <person name="Tiedje J."/>
            <person name="Richardson P."/>
        </authorList>
    </citation>
    <scope>NUCLEOTIDE SEQUENCE [LARGE SCALE GENOMIC DNA]</scope>
    <source>
        <strain>W3-18-1</strain>
    </source>
</reference>
<organism>
    <name type="scientific">Shewanella sp. (strain W3-18-1)</name>
    <dbReference type="NCBI Taxonomy" id="351745"/>
    <lineage>
        <taxon>Bacteria</taxon>
        <taxon>Pseudomonadati</taxon>
        <taxon>Pseudomonadota</taxon>
        <taxon>Gammaproteobacteria</taxon>
        <taxon>Alteromonadales</taxon>
        <taxon>Shewanellaceae</taxon>
        <taxon>Shewanella</taxon>
    </lineage>
</organism>
<dbReference type="EMBL" id="CP000503">
    <property type="protein sequence ID" value="ABM23033.1"/>
    <property type="molecule type" value="Genomic_DNA"/>
</dbReference>
<dbReference type="RefSeq" id="WP_011787582.1">
    <property type="nucleotide sequence ID" value="NC_008750.1"/>
</dbReference>
<dbReference type="SMR" id="A1RED8"/>
<dbReference type="GeneID" id="67441784"/>
<dbReference type="KEGG" id="shw:Sputw3181_0180"/>
<dbReference type="HOGENOM" id="CLU_092403_0_2_6"/>
<dbReference type="Proteomes" id="UP000002597">
    <property type="component" value="Chromosome"/>
</dbReference>
<dbReference type="GO" id="GO:0015935">
    <property type="term" value="C:small ribosomal subunit"/>
    <property type="evidence" value="ECO:0007669"/>
    <property type="project" value="InterPro"/>
</dbReference>
<dbReference type="GO" id="GO:0019843">
    <property type="term" value="F:rRNA binding"/>
    <property type="evidence" value="ECO:0007669"/>
    <property type="project" value="UniProtKB-UniRule"/>
</dbReference>
<dbReference type="GO" id="GO:0003735">
    <property type="term" value="F:structural constituent of ribosome"/>
    <property type="evidence" value="ECO:0007669"/>
    <property type="project" value="InterPro"/>
</dbReference>
<dbReference type="GO" id="GO:0042274">
    <property type="term" value="P:ribosomal small subunit biogenesis"/>
    <property type="evidence" value="ECO:0007669"/>
    <property type="project" value="TreeGrafter"/>
</dbReference>
<dbReference type="GO" id="GO:0006412">
    <property type="term" value="P:translation"/>
    <property type="evidence" value="ECO:0007669"/>
    <property type="project" value="UniProtKB-UniRule"/>
</dbReference>
<dbReference type="CDD" id="cd00165">
    <property type="entry name" value="S4"/>
    <property type="match status" value="1"/>
</dbReference>
<dbReference type="FunFam" id="1.10.1050.10:FF:000001">
    <property type="entry name" value="30S ribosomal protein S4"/>
    <property type="match status" value="1"/>
</dbReference>
<dbReference type="FunFam" id="3.10.290.10:FF:000001">
    <property type="entry name" value="30S ribosomal protein S4"/>
    <property type="match status" value="1"/>
</dbReference>
<dbReference type="Gene3D" id="1.10.1050.10">
    <property type="entry name" value="Ribosomal Protein S4 Delta 41, Chain A, domain 1"/>
    <property type="match status" value="1"/>
</dbReference>
<dbReference type="Gene3D" id="3.10.290.10">
    <property type="entry name" value="RNA-binding S4 domain"/>
    <property type="match status" value="1"/>
</dbReference>
<dbReference type="HAMAP" id="MF_01306_B">
    <property type="entry name" value="Ribosomal_uS4_B"/>
    <property type="match status" value="1"/>
</dbReference>
<dbReference type="InterPro" id="IPR022801">
    <property type="entry name" value="Ribosomal_uS4"/>
</dbReference>
<dbReference type="InterPro" id="IPR005709">
    <property type="entry name" value="Ribosomal_uS4_bac-type"/>
</dbReference>
<dbReference type="InterPro" id="IPR018079">
    <property type="entry name" value="Ribosomal_uS4_CS"/>
</dbReference>
<dbReference type="InterPro" id="IPR001912">
    <property type="entry name" value="Ribosomal_uS4_N"/>
</dbReference>
<dbReference type="InterPro" id="IPR002942">
    <property type="entry name" value="S4_RNA-bd"/>
</dbReference>
<dbReference type="InterPro" id="IPR036986">
    <property type="entry name" value="S4_RNA-bd_sf"/>
</dbReference>
<dbReference type="NCBIfam" id="NF003717">
    <property type="entry name" value="PRK05327.1"/>
    <property type="match status" value="1"/>
</dbReference>
<dbReference type="NCBIfam" id="TIGR01017">
    <property type="entry name" value="rpsD_bact"/>
    <property type="match status" value="1"/>
</dbReference>
<dbReference type="PANTHER" id="PTHR11831">
    <property type="entry name" value="30S 40S RIBOSOMAL PROTEIN"/>
    <property type="match status" value="1"/>
</dbReference>
<dbReference type="PANTHER" id="PTHR11831:SF4">
    <property type="entry name" value="SMALL RIBOSOMAL SUBUNIT PROTEIN US4M"/>
    <property type="match status" value="1"/>
</dbReference>
<dbReference type="Pfam" id="PF00163">
    <property type="entry name" value="Ribosomal_S4"/>
    <property type="match status" value="1"/>
</dbReference>
<dbReference type="Pfam" id="PF01479">
    <property type="entry name" value="S4"/>
    <property type="match status" value="1"/>
</dbReference>
<dbReference type="SMART" id="SM01390">
    <property type="entry name" value="Ribosomal_S4"/>
    <property type="match status" value="1"/>
</dbReference>
<dbReference type="SMART" id="SM00363">
    <property type="entry name" value="S4"/>
    <property type="match status" value="1"/>
</dbReference>
<dbReference type="SUPFAM" id="SSF55174">
    <property type="entry name" value="Alpha-L RNA-binding motif"/>
    <property type="match status" value="1"/>
</dbReference>
<dbReference type="PROSITE" id="PS00632">
    <property type="entry name" value="RIBOSOMAL_S4"/>
    <property type="match status" value="1"/>
</dbReference>
<dbReference type="PROSITE" id="PS50889">
    <property type="entry name" value="S4"/>
    <property type="match status" value="1"/>
</dbReference>
<feature type="chain" id="PRO_0000293369" description="Small ribosomal subunit protein uS4">
    <location>
        <begin position="1"/>
        <end position="206"/>
    </location>
</feature>
<feature type="domain" description="S4 RNA-binding" evidence="1">
    <location>
        <begin position="96"/>
        <end position="156"/>
    </location>
</feature>
<protein>
    <recommendedName>
        <fullName evidence="1">Small ribosomal subunit protein uS4</fullName>
    </recommendedName>
    <alternativeName>
        <fullName evidence="2">30S ribosomal protein S4</fullName>
    </alternativeName>
</protein>
<name>RS4_SHESW</name>
<accession>A1RED8</accession>
<evidence type="ECO:0000255" key="1">
    <source>
        <dbReference type="HAMAP-Rule" id="MF_01306"/>
    </source>
</evidence>
<evidence type="ECO:0000305" key="2"/>
<proteinExistence type="inferred from homology"/>
<gene>
    <name evidence="1" type="primary">rpsD</name>
    <name type="ordered locus">Sputw3181_0180</name>
</gene>
<sequence length="206" mass="23410">MARYLGPKLKLSRREGTDLFLKSGVRAIDSKCKLETAPGQHGARKPRLSEYGTQLREKQKVRRIYGVLEKQFRNYYKDAARLKGNTGENLLQLLETRLDNVVYRMGFGATRAESRQLVSHKSVMVNGRVVNIPSFKVSANDVVSIREKSRTQARIKAALEVAAQREKPTWVEVDSAKMEGAFKRVPERSDLSAEINEQLIVELYSK</sequence>
<comment type="function">
    <text evidence="1">One of the primary rRNA binding proteins, it binds directly to 16S rRNA where it nucleates assembly of the body of the 30S subunit.</text>
</comment>
<comment type="function">
    <text evidence="1">With S5 and S12 plays an important role in translational accuracy.</text>
</comment>
<comment type="subunit">
    <text evidence="1">Part of the 30S ribosomal subunit. Contacts protein S5. The interaction surface between S4 and S5 is involved in control of translational fidelity.</text>
</comment>
<comment type="similarity">
    <text evidence="1">Belongs to the universal ribosomal protein uS4 family.</text>
</comment>